<protein>
    <recommendedName>
        <fullName evidence="1">Urease subunit gamma</fullName>
        <ecNumber evidence="1">3.5.1.5</ecNumber>
    </recommendedName>
    <alternativeName>
        <fullName evidence="1">Urea amidohydrolase subunit gamma</fullName>
    </alternativeName>
</protein>
<organism>
    <name type="scientific">Paracoccus denitrificans (strain Pd 1222)</name>
    <dbReference type="NCBI Taxonomy" id="318586"/>
    <lineage>
        <taxon>Bacteria</taxon>
        <taxon>Pseudomonadati</taxon>
        <taxon>Pseudomonadota</taxon>
        <taxon>Alphaproteobacteria</taxon>
        <taxon>Rhodobacterales</taxon>
        <taxon>Paracoccaceae</taxon>
        <taxon>Paracoccus</taxon>
    </lineage>
</organism>
<accession>A1B1C2</accession>
<feature type="chain" id="PRO_1000046345" description="Urease subunit gamma">
    <location>
        <begin position="1"/>
        <end position="103"/>
    </location>
</feature>
<keyword id="KW-0963">Cytoplasm</keyword>
<keyword id="KW-0378">Hydrolase</keyword>
<keyword id="KW-1185">Reference proteome</keyword>
<dbReference type="EC" id="3.5.1.5" evidence="1"/>
<dbReference type="EMBL" id="CP000489">
    <property type="protein sequence ID" value="ABL69316.1"/>
    <property type="molecule type" value="Genomic_DNA"/>
</dbReference>
<dbReference type="RefSeq" id="WP_011747534.1">
    <property type="nucleotide sequence ID" value="NC_008686.1"/>
</dbReference>
<dbReference type="SMR" id="A1B1C2"/>
<dbReference type="STRING" id="318586.Pden_1211"/>
<dbReference type="EnsemblBacteria" id="ABL69316">
    <property type="protein sequence ID" value="ABL69316"/>
    <property type="gene ID" value="Pden_1211"/>
</dbReference>
<dbReference type="GeneID" id="93452427"/>
<dbReference type="KEGG" id="pde:Pden_1211"/>
<dbReference type="eggNOG" id="COG0831">
    <property type="taxonomic scope" value="Bacteria"/>
</dbReference>
<dbReference type="HOGENOM" id="CLU_145825_1_0_5"/>
<dbReference type="OrthoDB" id="9797217at2"/>
<dbReference type="UniPathway" id="UPA00258">
    <property type="reaction ID" value="UER00370"/>
</dbReference>
<dbReference type="Proteomes" id="UP000000361">
    <property type="component" value="Chromosome 1"/>
</dbReference>
<dbReference type="GO" id="GO:0005737">
    <property type="term" value="C:cytoplasm"/>
    <property type="evidence" value="ECO:0007669"/>
    <property type="project" value="UniProtKB-SubCell"/>
</dbReference>
<dbReference type="GO" id="GO:0016151">
    <property type="term" value="F:nickel cation binding"/>
    <property type="evidence" value="ECO:0007669"/>
    <property type="project" value="InterPro"/>
</dbReference>
<dbReference type="GO" id="GO:0009039">
    <property type="term" value="F:urease activity"/>
    <property type="evidence" value="ECO:0007669"/>
    <property type="project" value="UniProtKB-UniRule"/>
</dbReference>
<dbReference type="GO" id="GO:0043419">
    <property type="term" value="P:urea catabolic process"/>
    <property type="evidence" value="ECO:0007669"/>
    <property type="project" value="UniProtKB-UniRule"/>
</dbReference>
<dbReference type="CDD" id="cd00390">
    <property type="entry name" value="Urease_gamma"/>
    <property type="match status" value="1"/>
</dbReference>
<dbReference type="Gene3D" id="3.30.280.10">
    <property type="entry name" value="Urease, gamma-like subunit"/>
    <property type="match status" value="1"/>
</dbReference>
<dbReference type="HAMAP" id="MF_00739">
    <property type="entry name" value="Urease_gamma"/>
    <property type="match status" value="1"/>
</dbReference>
<dbReference type="InterPro" id="IPR012010">
    <property type="entry name" value="Urease_gamma"/>
</dbReference>
<dbReference type="InterPro" id="IPR002026">
    <property type="entry name" value="Urease_gamma/gamma-beta_su"/>
</dbReference>
<dbReference type="InterPro" id="IPR036463">
    <property type="entry name" value="Urease_gamma_sf"/>
</dbReference>
<dbReference type="InterPro" id="IPR050069">
    <property type="entry name" value="Urease_subunit"/>
</dbReference>
<dbReference type="NCBIfam" id="NF009712">
    <property type="entry name" value="PRK13241.1"/>
    <property type="match status" value="1"/>
</dbReference>
<dbReference type="NCBIfam" id="TIGR00193">
    <property type="entry name" value="urease_gam"/>
    <property type="match status" value="1"/>
</dbReference>
<dbReference type="PANTHER" id="PTHR33569">
    <property type="entry name" value="UREASE"/>
    <property type="match status" value="1"/>
</dbReference>
<dbReference type="PANTHER" id="PTHR33569:SF1">
    <property type="entry name" value="UREASE"/>
    <property type="match status" value="1"/>
</dbReference>
<dbReference type="Pfam" id="PF00547">
    <property type="entry name" value="Urease_gamma"/>
    <property type="match status" value="1"/>
</dbReference>
<dbReference type="PIRSF" id="PIRSF001223">
    <property type="entry name" value="Urease_gamma"/>
    <property type="match status" value="1"/>
</dbReference>
<dbReference type="SUPFAM" id="SSF54111">
    <property type="entry name" value="Urease, gamma-subunit"/>
    <property type="match status" value="1"/>
</dbReference>
<evidence type="ECO:0000255" key="1">
    <source>
        <dbReference type="HAMAP-Rule" id="MF_00739"/>
    </source>
</evidence>
<reference key="1">
    <citation type="submission" date="2006-12" db="EMBL/GenBank/DDBJ databases">
        <title>Complete sequence of chromosome 1 of Paracoccus denitrificans PD1222.</title>
        <authorList>
            <person name="Copeland A."/>
            <person name="Lucas S."/>
            <person name="Lapidus A."/>
            <person name="Barry K."/>
            <person name="Detter J.C."/>
            <person name="Glavina del Rio T."/>
            <person name="Hammon N."/>
            <person name="Israni S."/>
            <person name="Dalin E."/>
            <person name="Tice H."/>
            <person name="Pitluck S."/>
            <person name="Munk A.C."/>
            <person name="Brettin T."/>
            <person name="Bruce D."/>
            <person name="Han C."/>
            <person name="Tapia R."/>
            <person name="Gilna P."/>
            <person name="Schmutz J."/>
            <person name="Larimer F."/>
            <person name="Land M."/>
            <person name="Hauser L."/>
            <person name="Kyrpides N."/>
            <person name="Lykidis A."/>
            <person name="Spiro S."/>
            <person name="Richardson D.J."/>
            <person name="Moir J.W.B."/>
            <person name="Ferguson S.J."/>
            <person name="van Spanning R.J.M."/>
            <person name="Richardson P."/>
        </authorList>
    </citation>
    <scope>NUCLEOTIDE SEQUENCE [LARGE SCALE GENOMIC DNA]</scope>
    <source>
        <strain>Pd 1222</strain>
    </source>
</reference>
<name>URE3_PARDP</name>
<comment type="catalytic activity">
    <reaction evidence="1">
        <text>urea + 2 H2O + H(+) = hydrogencarbonate + 2 NH4(+)</text>
        <dbReference type="Rhea" id="RHEA:20557"/>
        <dbReference type="ChEBI" id="CHEBI:15377"/>
        <dbReference type="ChEBI" id="CHEBI:15378"/>
        <dbReference type="ChEBI" id="CHEBI:16199"/>
        <dbReference type="ChEBI" id="CHEBI:17544"/>
        <dbReference type="ChEBI" id="CHEBI:28938"/>
        <dbReference type="EC" id="3.5.1.5"/>
    </reaction>
</comment>
<comment type="pathway">
    <text evidence="1">Nitrogen metabolism; urea degradation; CO(2) and NH(3) from urea (urease route): step 1/1.</text>
</comment>
<comment type="subunit">
    <text evidence="1">Heterotrimer of UreA (gamma), UreB (beta) and UreC (alpha) subunits. Three heterotrimers associate to form the active enzyme.</text>
</comment>
<comment type="subcellular location">
    <subcellularLocation>
        <location evidence="1">Cytoplasm</location>
    </subcellularLocation>
</comment>
<comment type="similarity">
    <text evidence="1">Belongs to the urease gamma subunit family.</text>
</comment>
<sequence>MNLTPREREKLLVSLAAMVARNRLSRGVRLNHPEAIALITDFVVEGARDGRSVADLMQAGAHVITAGQCMSGVPEMIEAVQVEATFPDGTKLVTVHHPIRHEA</sequence>
<gene>
    <name evidence="1" type="primary">ureA</name>
    <name type="ordered locus">Pden_1211</name>
</gene>
<proteinExistence type="inferred from homology"/>